<keyword id="KW-0238">DNA-binding</keyword>
<keyword id="KW-0479">Metal-binding</keyword>
<keyword id="KW-0539">Nucleus</keyword>
<keyword id="KW-1185">Reference proteome</keyword>
<keyword id="KW-0678">Repressor</keyword>
<keyword id="KW-0804">Transcription</keyword>
<keyword id="KW-0805">Transcription regulation</keyword>
<keyword id="KW-0862">Zinc</keyword>
<keyword id="KW-0863">Zinc-finger</keyword>
<dbReference type="EMBL" id="CH480818">
    <property type="protein sequence ID" value="EDW52332.1"/>
    <property type="molecule type" value="Genomic_DNA"/>
</dbReference>
<dbReference type="SMR" id="B4HWD7"/>
<dbReference type="STRING" id="7238.B4HWD7"/>
<dbReference type="EnsemblMetazoa" id="FBtr0200817">
    <property type="protein sequence ID" value="FBpp0199309"/>
    <property type="gene ID" value="FBgn0172739"/>
</dbReference>
<dbReference type="EnsemblMetazoa" id="XM_002036373.2">
    <property type="protein sequence ID" value="XP_002036409.1"/>
    <property type="gene ID" value="LOC6611892"/>
</dbReference>
<dbReference type="GeneID" id="6611892"/>
<dbReference type="KEGG" id="dse:6611892"/>
<dbReference type="HOGENOM" id="CLU_040504_1_0_1"/>
<dbReference type="OMA" id="QYTRGIG"/>
<dbReference type="OrthoDB" id="42661at7215"/>
<dbReference type="PhylomeDB" id="B4HWD7"/>
<dbReference type="Proteomes" id="UP000001292">
    <property type="component" value="Unassembled WGS sequence"/>
</dbReference>
<dbReference type="GO" id="GO:0005634">
    <property type="term" value="C:nucleus"/>
    <property type="evidence" value="ECO:0007669"/>
    <property type="project" value="UniProtKB-SubCell"/>
</dbReference>
<dbReference type="GO" id="GO:0001227">
    <property type="term" value="F:DNA-binding transcription repressor activity, RNA polymerase II-specific"/>
    <property type="evidence" value="ECO:0007669"/>
    <property type="project" value="TreeGrafter"/>
</dbReference>
<dbReference type="GO" id="GO:0000978">
    <property type="term" value="F:RNA polymerase II cis-regulatory region sequence-specific DNA binding"/>
    <property type="evidence" value="ECO:0007669"/>
    <property type="project" value="TreeGrafter"/>
</dbReference>
<dbReference type="GO" id="GO:0008270">
    <property type="term" value="F:zinc ion binding"/>
    <property type="evidence" value="ECO:0007669"/>
    <property type="project" value="UniProtKB-KW"/>
</dbReference>
<dbReference type="Gene3D" id="2.30.30.1190">
    <property type="match status" value="1"/>
</dbReference>
<dbReference type="InterPro" id="IPR000467">
    <property type="entry name" value="G_patch_dom"/>
</dbReference>
<dbReference type="InterPro" id="IPR000571">
    <property type="entry name" value="Znf_CCCH"/>
</dbReference>
<dbReference type="PANTHER" id="PTHR46297">
    <property type="entry name" value="ZINC FINGER CCCH-TYPE WITH G PATCH DOMAIN-CONTAINING PROTEIN"/>
    <property type="match status" value="1"/>
</dbReference>
<dbReference type="PANTHER" id="PTHR46297:SF1">
    <property type="entry name" value="ZINC FINGER CCCH-TYPE WITH G PATCH DOMAIN-CONTAINING PROTEIN"/>
    <property type="match status" value="1"/>
</dbReference>
<dbReference type="Pfam" id="PF01585">
    <property type="entry name" value="G-patch"/>
    <property type="match status" value="1"/>
</dbReference>
<dbReference type="SMART" id="SM00443">
    <property type="entry name" value="G_patch"/>
    <property type="match status" value="1"/>
</dbReference>
<dbReference type="PROSITE" id="PS50174">
    <property type="entry name" value="G_PATCH"/>
    <property type="match status" value="1"/>
</dbReference>
<dbReference type="PROSITE" id="PS50103">
    <property type="entry name" value="ZF_C3H1"/>
    <property type="match status" value="1"/>
</dbReference>
<sequence length="513" mass="58675">MEEYEAQLLVVEQALENAADDAQRQELLALKNNLQELLALTRDTGDEAPTDELPQQGNDLDDELQRLKSELSDLEAAGSSQTALDEERQLADLRTKYTAMVGEKCSAPHEHSWGTCYHNALICGVDDEVVINSEGVLDARLRVLFTNPTHREMLPCSYYLEGECRFDEAKCRFSHGALVTGSSIRKYNPPDFHKLSRSRPVFALLPDRLWHRGRVLCVNFVEQVCRVRLDGQDHKERERDFKFEELYPLTTDQDEDDELSSEESTSSMRDASSDEAESDMDDLEEARRARMVELSLFTYKPTDRLGAWEEFTRGIGSKLMEKMGYIHGTGLGSEGRGIVTPVSAQILPQGRSLDACMELREAANGDKDYFSVERKLKRAQRRQRKADEKAYVRESQRVDVFTFLNDRVLGPGESTQQSEQVAKKAKNNELQQHSTKTLNVETVRIADEIRRKQRDMAKVKQSLERNSGDAQLQKRLQVQMQSHKQELATLQAQERSLSKEQQTRKSKNKMFEF</sequence>
<comment type="function">
    <text evidence="1">Transcription repressor.</text>
</comment>
<comment type="subcellular location">
    <subcellularLocation>
        <location evidence="1">Nucleus</location>
    </subcellularLocation>
</comment>
<reference key="1">
    <citation type="journal article" date="2007" name="Nature">
        <title>Evolution of genes and genomes on the Drosophila phylogeny.</title>
        <authorList>
            <consortium name="Drosophila 12 genomes consortium"/>
        </authorList>
    </citation>
    <scope>NUCLEOTIDE SEQUENCE [LARGE SCALE GENOMIC DNA]</scope>
    <source>
        <strain>Rob3c / Tucson 14021-0248.25</strain>
    </source>
</reference>
<proteinExistence type="inferred from homology"/>
<evidence type="ECO:0000250" key="1"/>
<evidence type="ECO:0000255" key="2">
    <source>
        <dbReference type="PROSITE-ProRule" id="PRU00092"/>
    </source>
</evidence>
<evidence type="ECO:0000255" key="3">
    <source>
        <dbReference type="PROSITE-ProRule" id="PRU00723"/>
    </source>
</evidence>
<evidence type="ECO:0000256" key="4">
    <source>
        <dbReference type="SAM" id="MobiDB-lite"/>
    </source>
</evidence>
<gene>
    <name type="ORF">GM17832</name>
</gene>
<name>ZGPAT_DROSE</name>
<feature type="chain" id="PRO_0000385207" description="Zinc finger CCCH-type with G patch domain-containing protein">
    <location>
        <begin position="1"/>
        <end position="513"/>
    </location>
</feature>
<feature type="domain" description="G-patch" evidence="2">
    <location>
        <begin position="312"/>
        <end position="358"/>
    </location>
</feature>
<feature type="zinc finger region" description="C3H1-type" evidence="3">
    <location>
        <begin position="155"/>
        <end position="178"/>
    </location>
</feature>
<feature type="region of interest" description="Disordered" evidence="4">
    <location>
        <begin position="252"/>
        <end position="283"/>
    </location>
</feature>
<feature type="region of interest" description="Disordered" evidence="4">
    <location>
        <begin position="411"/>
        <end position="430"/>
    </location>
</feature>
<feature type="region of interest" description="Disordered" evidence="4">
    <location>
        <begin position="477"/>
        <end position="513"/>
    </location>
</feature>
<feature type="compositionally biased region" description="Acidic residues" evidence="4">
    <location>
        <begin position="252"/>
        <end position="261"/>
    </location>
</feature>
<feature type="compositionally biased region" description="Acidic residues" evidence="4">
    <location>
        <begin position="273"/>
        <end position="283"/>
    </location>
</feature>
<feature type="compositionally biased region" description="Polar residues" evidence="4">
    <location>
        <begin position="477"/>
        <end position="495"/>
    </location>
</feature>
<feature type="compositionally biased region" description="Basic and acidic residues" evidence="4">
    <location>
        <begin position="496"/>
        <end position="513"/>
    </location>
</feature>
<organism>
    <name type="scientific">Drosophila sechellia</name>
    <name type="common">Fruit fly</name>
    <dbReference type="NCBI Taxonomy" id="7238"/>
    <lineage>
        <taxon>Eukaryota</taxon>
        <taxon>Metazoa</taxon>
        <taxon>Ecdysozoa</taxon>
        <taxon>Arthropoda</taxon>
        <taxon>Hexapoda</taxon>
        <taxon>Insecta</taxon>
        <taxon>Pterygota</taxon>
        <taxon>Neoptera</taxon>
        <taxon>Endopterygota</taxon>
        <taxon>Diptera</taxon>
        <taxon>Brachycera</taxon>
        <taxon>Muscomorpha</taxon>
        <taxon>Ephydroidea</taxon>
        <taxon>Drosophilidae</taxon>
        <taxon>Drosophila</taxon>
        <taxon>Sophophora</taxon>
    </lineage>
</organism>
<accession>B4HWD7</accession>
<protein>
    <recommendedName>
        <fullName>Zinc finger CCCH-type with G patch domain-containing protein</fullName>
    </recommendedName>
</protein>